<sequence>MRSFVTNNDIPVGYVTPKFPSLYWPINNSKYNTAFLYYISDIWKFSLYWTLIFNGAFYVTAGVYASLTHRKKAGSVWIFVMYVLYGGVQGLTTGTVMGFLIGAIYRSGLFSMSTWVPLCCAVVQILFDVVLSYSMVGSVM</sequence>
<evidence type="ECO:0000255" key="1"/>
<evidence type="ECO:0000305" key="2"/>
<dbReference type="EMBL" id="U40829">
    <property type="protein sequence ID" value="AAB68290.1"/>
    <property type="status" value="ALT_SEQ"/>
    <property type="molecule type" value="Genomic_DNA"/>
</dbReference>
<dbReference type="EMBL" id="DQ881453">
    <property type="protein sequence ID" value="ABI95880.1"/>
    <property type="molecule type" value="mRNA"/>
</dbReference>
<dbReference type="EMBL" id="EF123126">
    <property type="protein sequence ID" value="ABM97470.1"/>
    <property type="molecule type" value="mRNA"/>
</dbReference>
<dbReference type="EMBL" id="AY692714">
    <property type="protein sequence ID" value="AAT92733.1"/>
    <property type="status" value="ALT_SEQ"/>
    <property type="molecule type" value="Genomic_DNA"/>
</dbReference>
<dbReference type="EMBL" id="BK006949">
    <property type="protein sequence ID" value="DAA11565.1"/>
    <property type="molecule type" value="Genomic_DNA"/>
</dbReference>
<dbReference type="PIR" id="S69039">
    <property type="entry name" value="S69039"/>
</dbReference>
<dbReference type="BioGRID" id="36320">
    <property type="interactions" value="123"/>
</dbReference>
<dbReference type="FunCoup" id="Q06537">
    <property type="interactions" value="7"/>
</dbReference>
<dbReference type="IntAct" id="Q06537">
    <property type="interactions" value="1"/>
</dbReference>
<dbReference type="STRING" id="4932.YPR153W"/>
<dbReference type="GlyGen" id="Q06537">
    <property type="glycosylation" value="3 sites"/>
</dbReference>
<dbReference type="PaxDb" id="4932-YPR153W"/>
<dbReference type="PeptideAtlas" id="Q06537"/>
<dbReference type="EnsemblFungi" id="YPR153W_mRNA">
    <property type="protein sequence ID" value="YPR153W"/>
    <property type="gene ID" value="YPR153W"/>
</dbReference>
<dbReference type="KEGG" id="sce:YPR153W"/>
<dbReference type="AGR" id="SGD:S000006357"/>
<dbReference type="SGD" id="S000006357">
    <property type="gene designation" value="YPR153W"/>
</dbReference>
<dbReference type="VEuPathDB" id="FungiDB:YPR153W"/>
<dbReference type="eggNOG" id="ENOG502S0YM">
    <property type="taxonomic scope" value="Eukaryota"/>
</dbReference>
<dbReference type="HOGENOM" id="CLU_071343_1_0_1"/>
<dbReference type="InParanoid" id="Q06537"/>
<dbReference type="OMA" id="FPMQGGL"/>
<dbReference type="OrthoDB" id="2131401at2759"/>
<dbReference type="BioCyc" id="YEAST:G3O-34284-MONOMER"/>
<dbReference type="BioGRID-ORCS" id="856276">
    <property type="hits" value="2 hits in 10 CRISPR screens"/>
</dbReference>
<dbReference type="PRO" id="PR:Q06537"/>
<dbReference type="Proteomes" id="UP000002311">
    <property type="component" value="Chromosome XVI"/>
</dbReference>
<dbReference type="RNAct" id="Q06537">
    <property type="molecule type" value="protein"/>
</dbReference>
<dbReference type="GO" id="GO:0005789">
    <property type="term" value="C:endoplasmic reticulum membrane"/>
    <property type="evidence" value="ECO:0000314"/>
    <property type="project" value="SGD"/>
</dbReference>
<dbReference type="GO" id="GO:0071464">
    <property type="term" value="P:cellular response to hydrostatic pressure"/>
    <property type="evidence" value="ECO:0000315"/>
    <property type="project" value="SGD"/>
</dbReference>
<dbReference type="InterPro" id="IPR019334">
    <property type="entry name" value="Transmembrane_pr_170"/>
</dbReference>
<dbReference type="PANTHER" id="PTHR22779">
    <property type="entry name" value="SD17342P"/>
    <property type="match status" value="1"/>
</dbReference>
<dbReference type="PANTHER" id="PTHR22779:SF6">
    <property type="entry name" value="SD17342P"/>
    <property type="match status" value="1"/>
</dbReference>
<dbReference type="Pfam" id="PF10190">
    <property type="entry name" value="Tmemb_170"/>
    <property type="match status" value="1"/>
</dbReference>
<name>YP153_YEAST</name>
<keyword id="KW-0325">Glycoprotein</keyword>
<keyword id="KW-0472">Membrane</keyword>
<keyword id="KW-1185">Reference proteome</keyword>
<keyword id="KW-0812">Transmembrane</keyword>
<keyword id="KW-1133">Transmembrane helix</keyword>
<feature type="chain" id="PRO_0000244638" description="Uncharacterized protein YPR153W">
    <location>
        <begin position="1"/>
        <end position="140"/>
    </location>
</feature>
<feature type="transmembrane region" description="Helical" evidence="1">
    <location>
        <begin position="45"/>
        <end position="65"/>
    </location>
</feature>
<feature type="transmembrane region" description="Helical" evidence="1">
    <location>
        <begin position="76"/>
        <end position="96"/>
    </location>
</feature>
<feature type="transmembrane region" description="Helical" evidence="1">
    <location>
        <begin position="116"/>
        <end position="136"/>
    </location>
</feature>
<feature type="glycosylation site" description="N-linked (GlcNAc...) asparagine" evidence="1">
    <location>
        <position position="27"/>
    </location>
</feature>
<gene>
    <name type="ordered locus">YPR153W</name>
</gene>
<proteinExistence type="evidence at transcript level"/>
<protein>
    <recommendedName>
        <fullName>Uncharacterized protein YPR153W</fullName>
    </recommendedName>
</protein>
<comment type="subcellular location">
    <subcellularLocation>
        <location evidence="2">Membrane</location>
        <topology evidence="2">Multi-pass membrane protein</topology>
    </subcellularLocation>
</comment>
<comment type="similarity">
    <text evidence="2">Belongs to the TMEM170 family.</text>
</comment>
<comment type="sequence caution" evidence="2">
    <conflict type="erroneous gene model prediction">
        <sequence resource="EMBL-CDS" id="AAB68290"/>
    </conflict>
</comment>
<comment type="sequence caution" evidence="2">
    <conflict type="erroneous gene model prediction">
        <sequence resource="EMBL-CDS" id="AAT92733"/>
    </conflict>
</comment>
<accession>Q06537</accession>
<accession>A2TBM3</accession>
<accession>D6W4E9</accession>
<accession>Q06HN0</accession>
<organism>
    <name type="scientific">Saccharomyces cerevisiae (strain ATCC 204508 / S288c)</name>
    <name type="common">Baker's yeast</name>
    <dbReference type="NCBI Taxonomy" id="559292"/>
    <lineage>
        <taxon>Eukaryota</taxon>
        <taxon>Fungi</taxon>
        <taxon>Dikarya</taxon>
        <taxon>Ascomycota</taxon>
        <taxon>Saccharomycotina</taxon>
        <taxon>Saccharomycetes</taxon>
        <taxon>Saccharomycetales</taxon>
        <taxon>Saccharomycetaceae</taxon>
        <taxon>Saccharomyces</taxon>
    </lineage>
</organism>
<reference key="1">
    <citation type="journal article" date="1997" name="Nature">
        <title>The nucleotide sequence of Saccharomyces cerevisiae chromosome XVI.</title>
        <authorList>
            <person name="Bussey H."/>
            <person name="Storms R.K."/>
            <person name="Ahmed A."/>
            <person name="Albermann K."/>
            <person name="Allen E."/>
            <person name="Ansorge W."/>
            <person name="Araujo R."/>
            <person name="Aparicio A."/>
            <person name="Barrell B.G."/>
            <person name="Badcock K."/>
            <person name="Benes V."/>
            <person name="Botstein D."/>
            <person name="Bowman S."/>
            <person name="Brueckner M."/>
            <person name="Carpenter J."/>
            <person name="Cherry J.M."/>
            <person name="Chung E."/>
            <person name="Churcher C.M."/>
            <person name="Coster F."/>
            <person name="Davis K."/>
            <person name="Davis R.W."/>
            <person name="Dietrich F.S."/>
            <person name="Delius H."/>
            <person name="DiPaolo T."/>
            <person name="Dubois E."/>
            <person name="Duesterhoeft A."/>
            <person name="Duncan M."/>
            <person name="Floeth M."/>
            <person name="Fortin N."/>
            <person name="Friesen J.D."/>
            <person name="Fritz C."/>
            <person name="Goffeau A."/>
            <person name="Hall J."/>
            <person name="Hebling U."/>
            <person name="Heumann K."/>
            <person name="Hilbert H."/>
            <person name="Hillier L.W."/>
            <person name="Hunicke-Smith S."/>
            <person name="Hyman R.W."/>
            <person name="Johnston M."/>
            <person name="Kalman S."/>
            <person name="Kleine K."/>
            <person name="Komp C."/>
            <person name="Kurdi O."/>
            <person name="Lashkari D."/>
            <person name="Lew H."/>
            <person name="Lin A."/>
            <person name="Lin D."/>
            <person name="Louis E.J."/>
            <person name="Marathe R."/>
            <person name="Messenguy F."/>
            <person name="Mewes H.-W."/>
            <person name="Mirtipati S."/>
            <person name="Moestl D."/>
            <person name="Mueller-Auer S."/>
            <person name="Namath A."/>
            <person name="Nentwich U."/>
            <person name="Oefner P."/>
            <person name="Pearson D."/>
            <person name="Petel F.X."/>
            <person name="Pohl T.M."/>
            <person name="Purnelle B."/>
            <person name="Rajandream M.A."/>
            <person name="Rechmann S."/>
            <person name="Rieger M."/>
            <person name="Riles L."/>
            <person name="Roberts D."/>
            <person name="Schaefer M."/>
            <person name="Scharfe M."/>
            <person name="Scherens B."/>
            <person name="Schramm S."/>
            <person name="Schroeder M."/>
            <person name="Sdicu A.-M."/>
            <person name="Tettelin H."/>
            <person name="Urrestarazu L.A."/>
            <person name="Ushinsky S."/>
            <person name="Vierendeels F."/>
            <person name="Vissers S."/>
            <person name="Voss H."/>
            <person name="Walsh S.V."/>
            <person name="Wambutt R."/>
            <person name="Wang Y."/>
            <person name="Wedler E."/>
            <person name="Wedler H."/>
            <person name="Winnett E."/>
            <person name="Zhong W.-W."/>
            <person name="Zollner A."/>
            <person name="Vo D.H."/>
            <person name="Hani J."/>
        </authorList>
    </citation>
    <scope>NUCLEOTIDE SEQUENCE [LARGE SCALE GENOMIC DNA]</scope>
    <source>
        <strain>ATCC 204508 / S288c</strain>
    </source>
</reference>
<reference key="2">
    <citation type="journal article" date="2014" name="G3 (Bethesda)">
        <title>The reference genome sequence of Saccharomyces cerevisiae: Then and now.</title>
        <authorList>
            <person name="Engel S.R."/>
            <person name="Dietrich F.S."/>
            <person name="Fisk D.G."/>
            <person name="Binkley G."/>
            <person name="Balakrishnan R."/>
            <person name="Costanzo M.C."/>
            <person name="Dwight S.S."/>
            <person name="Hitz B.C."/>
            <person name="Karra K."/>
            <person name="Nash R.S."/>
            <person name="Weng S."/>
            <person name="Wong E.D."/>
            <person name="Lloyd P."/>
            <person name="Skrzypek M.S."/>
            <person name="Miyasato S.R."/>
            <person name="Simison M."/>
            <person name="Cherry J.M."/>
        </authorList>
    </citation>
    <scope>GENOME REANNOTATION</scope>
    <source>
        <strain>ATCC 204508 / S288c</strain>
    </source>
</reference>
<reference key="3">
    <citation type="journal article" date="2007" name="Genome Res.">
        <title>Genome-wide identification of spliced introns using a tiling microarray.</title>
        <authorList>
            <person name="Zhang Z."/>
            <person name="Hesselberth J.R."/>
            <person name="Fields S."/>
        </authorList>
    </citation>
    <scope>NUCLEOTIDE SEQUENCE [MRNA] OF 1-123</scope>
    <source>
        <strain>ATCC 201390 / BY4743</strain>
    </source>
</reference>
<reference key="4">
    <citation type="journal article" date="2007" name="Proc. Natl. Acad. Sci. U.S.A.">
        <title>High-density yeast-tiling array reveals previously undiscovered introns and extensive regulation of meiotic splicing.</title>
        <authorList>
            <person name="Juneau K."/>
            <person name="Palm C."/>
            <person name="Miranda M."/>
            <person name="Davis R.W."/>
        </authorList>
    </citation>
    <scope>NUCLEOTIDE SEQUENCE [MRNA] OF 1-58</scope>
    <source>
        <strain>ATCC 201390 / BY4743</strain>
    </source>
</reference>
<reference key="5">
    <citation type="journal article" date="2007" name="Genome Res.">
        <title>Approaching a complete repository of sequence-verified protein-encoding clones for Saccharomyces cerevisiae.</title>
        <authorList>
            <person name="Hu Y."/>
            <person name="Rolfs A."/>
            <person name="Bhullar B."/>
            <person name="Murthy T.V.S."/>
            <person name="Zhu C."/>
            <person name="Berger M.F."/>
            <person name="Camargo A.A."/>
            <person name="Kelley F."/>
            <person name="McCarron S."/>
            <person name="Jepson D."/>
            <person name="Richardson A."/>
            <person name="Raphael J."/>
            <person name="Moreira D."/>
            <person name="Taycher E."/>
            <person name="Zuo D."/>
            <person name="Mohr S."/>
            <person name="Kane M.F."/>
            <person name="Williamson J."/>
            <person name="Simpson A.J.G."/>
            <person name="Bulyk M.L."/>
            <person name="Harlow E."/>
            <person name="Marsischky G."/>
            <person name="Kolodner R.D."/>
            <person name="LaBaer J."/>
        </authorList>
    </citation>
    <scope>NUCLEOTIDE SEQUENCE [GENOMIC DNA] OF 3-140</scope>
    <source>
        <strain>ATCC 204508 / S288c</strain>
    </source>
</reference>
<reference key="6">
    <citation type="journal article" date="2006" name="Proc. Natl. Acad. Sci. U.S.A.">
        <title>A large-scale full-length cDNA analysis to explore the budding yeast transcriptome.</title>
        <authorList>
            <person name="Miura F."/>
            <person name="Kawaguchi N."/>
            <person name="Sese J."/>
            <person name="Toyoda A."/>
            <person name="Hattori M."/>
            <person name="Morishita S."/>
            <person name="Ito T."/>
        </authorList>
    </citation>
    <scope>IDENTIFICATION OF INTRON</scope>
</reference>